<organism>
    <name type="scientific">Escherichia coli O9:H4 (strain HS)</name>
    <dbReference type="NCBI Taxonomy" id="331112"/>
    <lineage>
        <taxon>Bacteria</taxon>
        <taxon>Pseudomonadati</taxon>
        <taxon>Pseudomonadota</taxon>
        <taxon>Gammaproteobacteria</taxon>
        <taxon>Enterobacterales</taxon>
        <taxon>Enterobacteriaceae</taxon>
        <taxon>Escherichia</taxon>
    </lineage>
</organism>
<reference key="1">
    <citation type="journal article" date="2008" name="J. Bacteriol.">
        <title>The pangenome structure of Escherichia coli: comparative genomic analysis of E. coli commensal and pathogenic isolates.</title>
        <authorList>
            <person name="Rasko D.A."/>
            <person name="Rosovitz M.J."/>
            <person name="Myers G.S.A."/>
            <person name="Mongodin E.F."/>
            <person name="Fricke W.F."/>
            <person name="Gajer P."/>
            <person name="Crabtree J."/>
            <person name="Sebaihia M."/>
            <person name="Thomson N.R."/>
            <person name="Chaudhuri R."/>
            <person name="Henderson I.R."/>
            <person name="Sperandio V."/>
            <person name="Ravel J."/>
        </authorList>
    </citation>
    <scope>NUCLEOTIDE SEQUENCE [LARGE SCALE GENOMIC DNA]</scope>
    <source>
        <strain>HS</strain>
    </source>
</reference>
<sequence>MMITLRKLPLAVAVAAGVMSAQAMAVDFHGYARSGIGWTGSGGEQQCFQTTGAQSKYRLGNECETYAELKLGQEVWKEGDKSFYFDTNVAYSVAQQNDWEATDPAFREANVQGKNLIEWLPGSTIWAGKRFYQRHDVHMIDFYYWDISGPGAGLENIDVGFGKLSLAATRSSEAGGSSSFASNNIYDYTNETANDVFDVRLAQMEINPGGTLELGVDYGRANLRDNYRLVDGASKDGWLFTAEHTQSVLKGFNKFVVQYATDSMTSQGKGLSQGSGVAFDNEKFAYNINNNGHMLRILDHGAISMGDNWDMMYVGMYQDINWDNDNGTKWWTVGIRPMYKWTPIMSTVMEIGYDNVESQRTGDKNNQYKITLAQQWQAGDSIWSRPAIRVFATYAKWDEKWGYDYNGDSKVNPNYGKAVPADFNGGSFGRGDSDEWTFGAQMEIWW</sequence>
<dbReference type="EMBL" id="CP000802">
    <property type="protein sequence ID" value="ABV08440.1"/>
    <property type="molecule type" value="Genomic_DNA"/>
</dbReference>
<dbReference type="RefSeq" id="WP_000973658.1">
    <property type="nucleotide sequence ID" value="NC_009800.1"/>
</dbReference>
<dbReference type="BMRB" id="A8A7D6"/>
<dbReference type="SMR" id="A8A7D6"/>
<dbReference type="GeneID" id="93777799"/>
<dbReference type="KEGG" id="ecx:EcHS_A4276"/>
<dbReference type="HOGENOM" id="CLU_032473_4_1_6"/>
<dbReference type="GO" id="GO:0009279">
    <property type="term" value="C:cell outer membrane"/>
    <property type="evidence" value="ECO:0007669"/>
    <property type="project" value="UniProtKB-SubCell"/>
</dbReference>
<dbReference type="GO" id="GO:0046930">
    <property type="term" value="C:pore complex"/>
    <property type="evidence" value="ECO:0007669"/>
    <property type="project" value="UniProtKB-KW"/>
</dbReference>
<dbReference type="GO" id="GO:0042958">
    <property type="term" value="F:maltodextrin transmembrane transporter activity"/>
    <property type="evidence" value="ECO:0007669"/>
    <property type="project" value="InterPro"/>
</dbReference>
<dbReference type="GO" id="GO:0015481">
    <property type="term" value="F:maltose transporting porin activity"/>
    <property type="evidence" value="ECO:0007669"/>
    <property type="project" value="InterPro"/>
</dbReference>
<dbReference type="GO" id="GO:0006811">
    <property type="term" value="P:monoatomic ion transport"/>
    <property type="evidence" value="ECO:0007669"/>
    <property type="project" value="UniProtKB-KW"/>
</dbReference>
<dbReference type="CDD" id="cd01346">
    <property type="entry name" value="Maltoporin-like"/>
    <property type="match status" value="1"/>
</dbReference>
<dbReference type="FunFam" id="2.40.170.10:FF:000001">
    <property type="entry name" value="Maltoporin"/>
    <property type="match status" value="1"/>
</dbReference>
<dbReference type="Gene3D" id="2.40.170.10">
    <property type="entry name" value="Porin, LamB type"/>
    <property type="match status" value="1"/>
</dbReference>
<dbReference type="HAMAP" id="MF_01301">
    <property type="entry name" value="LamB"/>
    <property type="match status" value="1"/>
</dbReference>
<dbReference type="InterPro" id="IPR050286">
    <property type="entry name" value="G_neg_Bact_CarbUptk_Porin"/>
</dbReference>
<dbReference type="InterPro" id="IPR023738">
    <property type="entry name" value="Maltoporin"/>
</dbReference>
<dbReference type="InterPro" id="IPR003192">
    <property type="entry name" value="Porin_LamB"/>
</dbReference>
<dbReference type="InterPro" id="IPR036998">
    <property type="entry name" value="Porin_LamB_sf"/>
</dbReference>
<dbReference type="NCBIfam" id="NF006860">
    <property type="entry name" value="PRK09360.1"/>
    <property type="match status" value="1"/>
</dbReference>
<dbReference type="PANTHER" id="PTHR38762">
    <property type="entry name" value="CRYPTIC OUTER MEMBRANE PORIN BGLH-RELATED"/>
    <property type="match status" value="1"/>
</dbReference>
<dbReference type="PANTHER" id="PTHR38762:SF1">
    <property type="entry name" value="CRYPTIC OUTER MEMBRANE PORIN BGLH-RELATED"/>
    <property type="match status" value="1"/>
</dbReference>
<dbReference type="Pfam" id="PF02264">
    <property type="entry name" value="LamB"/>
    <property type="match status" value="1"/>
</dbReference>
<dbReference type="SUPFAM" id="SSF56935">
    <property type="entry name" value="Porins"/>
    <property type="match status" value="1"/>
</dbReference>
<accession>A8A7D6</accession>
<protein>
    <recommendedName>
        <fullName evidence="1">Maltoporin</fullName>
    </recommendedName>
    <alternativeName>
        <fullName evidence="1">Maltose-inducible porin</fullName>
    </alternativeName>
</protein>
<gene>
    <name evidence="1" type="primary">lamB</name>
    <name type="ordered locus">EcHS_A4276</name>
</gene>
<feature type="signal peptide" evidence="1">
    <location>
        <begin position="1"/>
        <end position="25"/>
    </location>
</feature>
<feature type="chain" id="PRO_1000067480" description="Maltoporin">
    <location>
        <begin position="26"/>
        <end position="446"/>
    </location>
</feature>
<feature type="site" description="Greasy slide, important in sugar transport" evidence="1">
    <location>
        <position position="31"/>
    </location>
</feature>
<feature type="site" description="Greasy slide, important in sugar transport" evidence="1">
    <location>
        <position position="66"/>
    </location>
</feature>
<feature type="site" description="Greasy slide, important in sugar transport" evidence="1">
    <location>
        <position position="99"/>
    </location>
</feature>
<feature type="site" description="Important in sugar transport" evidence="1">
    <location>
        <position position="143"/>
    </location>
</feature>
<feature type="site" description="Greasy slide, important in sugar transport" evidence="1">
    <location>
        <position position="252"/>
    </location>
</feature>
<feature type="site" description="Greasy slide, important in sugar transport" evidence="1">
    <location>
        <position position="383"/>
    </location>
</feature>
<feature type="site" description="Greasy slide, important in sugar transport" evidence="1">
    <location>
        <position position="445"/>
    </location>
</feature>
<evidence type="ECO:0000255" key="1">
    <source>
        <dbReference type="HAMAP-Rule" id="MF_01301"/>
    </source>
</evidence>
<comment type="function">
    <text evidence="1">Involved in the transport of maltose and maltodextrins.</text>
</comment>
<comment type="catalytic activity">
    <reaction evidence="1">
        <text>beta-maltose(in) = beta-maltose(out)</text>
        <dbReference type="Rhea" id="RHEA:29731"/>
        <dbReference type="ChEBI" id="CHEBI:18147"/>
    </reaction>
</comment>
<comment type="subunit">
    <text evidence="1">Homotrimer formed of three 18-stranded antiparallel beta-barrels, containing three independent channels.</text>
</comment>
<comment type="subcellular location">
    <subcellularLocation>
        <location evidence="1">Cell outer membrane</location>
        <topology evidence="1">Multi-pass membrane protein</topology>
    </subcellularLocation>
</comment>
<comment type="induction">
    <text evidence="1">By maltose.</text>
</comment>
<comment type="similarity">
    <text evidence="1">Belongs to the porin LamB (TC 1.B.3) family.</text>
</comment>
<keyword id="KW-0998">Cell outer membrane</keyword>
<keyword id="KW-0406">Ion transport</keyword>
<keyword id="KW-0472">Membrane</keyword>
<keyword id="KW-0626">Porin</keyword>
<keyword id="KW-0732">Signal</keyword>
<keyword id="KW-0762">Sugar transport</keyword>
<keyword id="KW-0812">Transmembrane</keyword>
<keyword id="KW-1134">Transmembrane beta strand</keyword>
<keyword id="KW-0813">Transport</keyword>
<proteinExistence type="inferred from homology"/>
<name>LAMB_ECOHS</name>